<accession>P60181</accession>
<accession>Q8SPF1</accession>
<reference key="1">
    <citation type="submission" date="2001-09" db="EMBL/GenBank/DDBJ databases">
        <title>EST sequence screening of cynomolgus monkey cDNAs to find genes positively selected between hominoid and old monkey lineages.</title>
        <authorList>
            <person name="Osada N."/>
            <person name="Kusuda J."/>
            <person name="Hirata M."/>
            <person name="Tanuma R."/>
            <person name="Hida M."/>
            <person name="Sugano S."/>
            <person name="Hirai M."/>
            <person name="Hashimoto K."/>
        </authorList>
    </citation>
    <scope>NUCLEOTIDE SEQUENCE [GENOMIC DNA]</scope>
</reference>
<reference key="2">
    <citation type="journal article" date="2003" name="Proc. Natl. Acad. Sci. U.S.A.">
        <title>Adaptive evolution of cytochrome c oxidase subunit VIII in anthropoid primates.</title>
        <authorList>
            <person name="Goldberg A."/>
            <person name="Wildman D.E."/>
            <person name="Schmidt T.R."/>
            <person name="Huttemann M."/>
            <person name="Goodman M."/>
            <person name="Weiss M.L."/>
            <person name="Grossman L.I."/>
        </authorList>
    </citation>
    <scope>NUCLEOTIDE SEQUENCE [GENOMIC DNA]</scope>
</reference>
<evidence type="ECO:0000250" key="1">
    <source>
        <dbReference type="UniProtKB" id="P10175"/>
    </source>
</evidence>
<evidence type="ECO:0000250" key="2">
    <source>
        <dbReference type="UniProtKB" id="P10176"/>
    </source>
</evidence>
<evidence type="ECO:0000305" key="3"/>
<comment type="function">
    <text evidence="1">Component of the cytochrome c oxidase, the last enzyme in the mitochondrial electron transport chain which drives oxidative phosphorylation. The respiratory chain contains 3 multisubunit complexes succinate dehydrogenase (complex II, CII), ubiquinol-cytochrome c oxidoreductase (cytochrome b-c1 complex, complex III, CIII) and cytochrome c oxidase (complex IV, CIV), that cooperate to transfer electrons derived from NADH and succinate to molecular oxygen, creating an electrochemical gradient over the inner membrane that drives transmembrane transport and the ATP synthase. Cytochrome c oxidase is the component of the respiratory chain that catalyzes the reduction of oxygen to water. Electrons originating from reduced cytochrome c in the intermembrane space (IMS) are transferred via the dinuclear copper A center (CU(A)) of subunit 2 and heme A of subunit 1 to the active site in subunit 1, a binuclear center (BNC) formed by heme A3 and copper B (CU(B)). The BNC reduces molecular oxygen to 2 water molecules using 4 electrons from cytochrome c in the IMS and 4 protons from the mitochondrial matrix.</text>
</comment>
<comment type="pathway">
    <text evidence="1">Energy metabolism; oxidative phosphorylation.</text>
</comment>
<comment type="subunit">
    <text evidence="2">Component of the cytochrome c oxidase (complex IV, CIV), a multisubunit enzyme composed of 14 subunits. The complex is composed of a catalytic core of 3 subunits MT-CO1, MT-CO2 and MT-CO3, encoded in the mitochondrial DNA, and 11 supernumerary subunits COX4I, COX5A, COX5B, COX6A, COX6B, COX6C, COX7A, COX7B, COX7C, COX8 and NDUFA4, which are encoded in the nuclear genome. The complex exists as a monomer or a dimer and forms supercomplexes (SCs) in the inner mitochondrial membrane with NADH-ubiquinone oxidoreductase (complex I, CI) and ubiquinol-cytochrome c oxidoreductase (cytochrome b-c1 complex, complex III, CIII), resulting in different assemblies (supercomplex SCI(1)III(2)IV(1) and megacomplex MCI(2)III(2)IV(2)).</text>
</comment>
<comment type="subcellular location">
    <subcellularLocation>
        <location evidence="2">Mitochondrion inner membrane</location>
        <topology evidence="2">Single-pass membrane protein</topology>
    </subcellularLocation>
</comment>
<comment type="PTM">
    <text evidence="2">In response to mitochondrial stress, the precursor protein is ubiquitinated by the SIFI complex in the cytoplasm before mitochondrial import, leading to its degradation. Within the SIFI complex, UBR4 initiates ubiquitin chain that are further elongated or branched by KCMF1.</text>
</comment>
<comment type="similarity">
    <text evidence="3">Belongs to the cytochrome c oxidase VIII family.</text>
</comment>
<proteinExistence type="inferred from homology"/>
<protein>
    <recommendedName>
        <fullName>Cytochrome c oxidase subunit 8A, mitochondrial</fullName>
    </recommendedName>
    <alternativeName>
        <fullName>Cytochrome c oxidase polypeptide VIII-liver/heart</fullName>
    </alternativeName>
    <alternativeName>
        <fullName>Cytochrome c oxidase subunit 8-2</fullName>
    </alternativeName>
</protein>
<dbReference type="EMBL" id="AB072325">
    <property type="protein sequence ID" value="BAB86877.1"/>
    <property type="molecule type" value="Genomic_DNA"/>
</dbReference>
<dbReference type="EMBL" id="AY254808">
    <property type="protein sequence ID" value="AAP32243.1"/>
    <property type="molecule type" value="Genomic_DNA"/>
</dbReference>
<dbReference type="EMBL" id="AY254807">
    <property type="protein sequence ID" value="AAP32243.1"/>
    <property type="status" value="JOINED"/>
    <property type="molecule type" value="Genomic_DNA"/>
</dbReference>
<dbReference type="SMR" id="P60181"/>
<dbReference type="STRING" id="9597.ENSPPAP00000009911"/>
<dbReference type="Ensembl" id="ENSPPAT00000032558.1">
    <property type="protein sequence ID" value="ENSPPAP00000009911.1"/>
    <property type="gene ID" value="ENSPPAG00000028187.1"/>
</dbReference>
<dbReference type="GeneID" id="103783322"/>
<dbReference type="KEGG" id="pps:103783322"/>
<dbReference type="eggNOG" id="ENOG502SA62">
    <property type="taxonomic scope" value="Eukaryota"/>
</dbReference>
<dbReference type="GeneTree" id="ENSGT00390000006255"/>
<dbReference type="OMA" id="AQVHSMP"/>
<dbReference type="OrthoDB" id="2219at9604"/>
<dbReference type="UniPathway" id="UPA00705"/>
<dbReference type="Proteomes" id="UP000240080">
    <property type="component" value="Chromosome 11"/>
</dbReference>
<dbReference type="Bgee" id="ENSPPAG00000028187">
    <property type="expression patterns" value="Expressed in adult mammalian kidney and 6 other cell types or tissues"/>
</dbReference>
<dbReference type="GO" id="GO:0005743">
    <property type="term" value="C:mitochondrial inner membrane"/>
    <property type="evidence" value="ECO:0007669"/>
    <property type="project" value="UniProtKB-SubCell"/>
</dbReference>
<dbReference type="GO" id="GO:0045277">
    <property type="term" value="C:respiratory chain complex IV"/>
    <property type="evidence" value="ECO:0007669"/>
    <property type="project" value="InterPro"/>
</dbReference>
<dbReference type="GO" id="GO:0006123">
    <property type="term" value="P:mitochondrial electron transport, cytochrome c to oxygen"/>
    <property type="evidence" value="ECO:0007669"/>
    <property type="project" value="InterPro"/>
</dbReference>
<dbReference type="CDD" id="cd00930">
    <property type="entry name" value="Cyt_c_Oxidase_VIII"/>
    <property type="match status" value="1"/>
</dbReference>
<dbReference type="FunFam" id="4.10.81.10:FF:000001">
    <property type="entry name" value="Cytochrome c oxidase subunit 8B, mitochondrial"/>
    <property type="match status" value="1"/>
</dbReference>
<dbReference type="Gene3D" id="4.10.81.10">
    <property type="entry name" value="Cytochrome c oxidase, subunit 8"/>
    <property type="match status" value="1"/>
</dbReference>
<dbReference type="InterPro" id="IPR003205">
    <property type="entry name" value="Cyt_c_oxidase_su8"/>
</dbReference>
<dbReference type="InterPro" id="IPR036548">
    <property type="entry name" value="Cyt_c_oxidase_su8_sf"/>
</dbReference>
<dbReference type="PANTHER" id="PTHR16717">
    <property type="entry name" value="CYTOCHROME C OXIDASE POLYPEPTIDE VIII"/>
    <property type="match status" value="1"/>
</dbReference>
<dbReference type="PANTHER" id="PTHR16717:SF1">
    <property type="entry name" value="CYTOCHROME C OXIDASE SUBUNIT 8A, MITOCHONDRIAL"/>
    <property type="match status" value="1"/>
</dbReference>
<dbReference type="Pfam" id="PF02285">
    <property type="entry name" value="COX8"/>
    <property type="match status" value="1"/>
</dbReference>
<dbReference type="SUPFAM" id="SSF81431">
    <property type="entry name" value="Mitochondrial cytochrome c oxidase subunit VIIIb (aka IX)"/>
    <property type="match status" value="1"/>
</dbReference>
<name>COX8A_PANPA</name>
<feature type="transit peptide" description="Mitochondrion" evidence="2">
    <location>
        <begin position="1"/>
        <end position="25"/>
    </location>
</feature>
<feature type="chain" id="PRO_0000006191" description="Cytochrome c oxidase subunit 8A, mitochondrial">
    <location>
        <begin position="26"/>
        <end position="69"/>
    </location>
</feature>
<feature type="topological domain" description="Mitochondrial matrix" evidence="2">
    <location>
        <begin position="26"/>
        <end position="36"/>
    </location>
</feature>
<feature type="transmembrane region" description="Helical" evidence="1">
    <location>
        <begin position="37"/>
        <end position="60"/>
    </location>
</feature>
<feature type="topological domain" description="Mitochondrial intermembrane" evidence="2">
    <location>
        <begin position="61"/>
        <end position="69"/>
    </location>
</feature>
<feature type="short sequence motif" description="SIFI-degron" evidence="2">
    <location>
        <begin position="2"/>
        <end position="19"/>
    </location>
</feature>
<sequence>MSVLTPLLLRGLTGSARRLPVPRAKIHSLPPEEKLGIMELAVGLTSCFVTFLLPAGWILSHLETYRRPE</sequence>
<organism>
    <name type="scientific">Pan paniscus</name>
    <name type="common">Pygmy chimpanzee</name>
    <name type="synonym">Bonobo</name>
    <dbReference type="NCBI Taxonomy" id="9597"/>
    <lineage>
        <taxon>Eukaryota</taxon>
        <taxon>Metazoa</taxon>
        <taxon>Chordata</taxon>
        <taxon>Craniata</taxon>
        <taxon>Vertebrata</taxon>
        <taxon>Euteleostomi</taxon>
        <taxon>Mammalia</taxon>
        <taxon>Eutheria</taxon>
        <taxon>Euarchontoglires</taxon>
        <taxon>Primates</taxon>
        <taxon>Haplorrhini</taxon>
        <taxon>Catarrhini</taxon>
        <taxon>Hominidae</taxon>
        <taxon>Pan</taxon>
    </lineage>
</organism>
<gene>
    <name type="primary">COX8A</name>
    <name type="synonym">COX8</name>
    <name type="synonym">COX8L</name>
</gene>
<keyword id="KW-0472">Membrane</keyword>
<keyword id="KW-0496">Mitochondrion</keyword>
<keyword id="KW-0999">Mitochondrion inner membrane</keyword>
<keyword id="KW-1185">Reference proteome</keyword>
<keyword id="KW-0809">Transit peptide</keyword>
<keyword id="KW-0812">Transmembrane</keyword>
<keyword id="KW-1133">Transmembrane helix</keyword>
<keyword id="KW-0832">Ubl conjugation</keyword>